<gene>
    <name evidence="1" type="primary">rpsI</name>
    <name type="ordered locus">Shewana3_0693</name>
</gene>
<name>RS9_SHESA</name>
<sequence>MAATQYYGTGRRKTSTARVFAKAGSGNIVVNQRPLDQYFGRETARMVVRQPLELVEMTDKLDIYVTVKGGGITGQAGAIRHGITRALMQLDEALRPSLRSAGFVTRDARKVERKKVGLRKARRKPQFSKR</sequence>
<organism>
    <name type="scientific">Shewanella sp. (strain ANA-3)</name>
    <dbReference type="NCBI Taxonomy" id="94122"/>
    <lineage>
        <taxon>Bacteria</taxon>
        <taxon>Pseudomonadati</taxon>
        <taxon>Pseudomonadota</taxon>
        <taxon>Gammaproteobacteria</taxon>
        <taxon>Alteromonadales</taxon>
        <taxon>Shewanellaceae</taxon>
        <taxon>Shewanella</taxon>
    </lineage>
</organism>
<accession>A0KT12</accession>
<reference key="1">
    <citation type="submission" date="2006-09" db="EMBL/GenBank/DDBJ databases">
        <title>Complete sequence of chromosome 1 of Shewanella sp. ANA-3.</title>
        <authorList>
            <person name="Copeland A."/>
            <person name="Lucas S."/>
            <person name="Lapidus A."/>
            <person name="Barry K."/>
            <person name="Detter J.C."/>
            <person name="Glavina del Rio T."/>
            <person name="Hammon N."/>
            <person name="Israni S."/>
            <person name="Dalin E."/>
            <person name="Tice H."/>
            <person name="Pitluck S."/>
            <person name="Chertkov O."/>
            <person name="Brettin T."/>
            <person name="Bruce D."/>
            <person name="Han C."/>
            <person name="Tapia R."/>
            <person name="Gilna P."/>
            <person name="Schmutz J."/>
            <person name="Larimer F."/>
            <person name="Land M."/>
            <person name="Hauser L."/>
            <person name="Kyrpides N."/>
            <person name="Kim E."/>
            <person name="Newman D."/>
            <person name="Salticov C."/>
            <person name="Konstantinidis K."/>
            <person name="Klappenback J."/>
            <person name="Tiedje J."/>
            <person name="Richardson P."/>
        </authorList>
    </citation>
    <scope>NUCLEOTIDE SEQUENCE [LARGE SCALE GENOMIC DNA]</scope>
    <source>
        <strain>ANA-3</strain>
    </source>
</reference>
<dbReference type="EMBL" id="CP000469">
    <property type="protein sequence ID" value="ABK46931.1"/>
    <property type="molecule type" value="Genomic_DNA"/>
</dbReference>
<dbReference type="RefSeq" id="WP_006083052.1">
    <property type="nucleotide sequence ID" value="NC_008577.1"/>
</dbReference>
<dbReference type="SMR" id="A0KT12"/>
<dbReference type="STRING" id="94122.Shewana3_0693"/>
<dbReference type="GeneID" id="94726683"/>
<dbReference type="KEGG" id="shn:Shewana3_0693"/>
<dbReference type="eggNOG" id="COG0103">
    <property type="taxonomic scope" value="Bacteria"/>
</dbReference>
<dbReference type="HOGENOM" id="CLU_046483_2_1_6"/>
<dbReference type="OrthoDB" id="9803965at2"/>
<dbReference type="Proteomes" id="UP000002589">
    <property type="component" value="Chromosome"/>
</dbReference>
<dbReference type="GO" id="GO:0022627">
    <property type="term" value="C:cytosolic small ribosomal subunit"/>
    <property type="evidence" value="ECO:0007669"/>
    <property type="project" value="TreeGrafter"/>
</dbReference>
<dbReference type="GO" id="GO:0003723">
    <property type="term" value="F:RNA binding"/>
    <property type="evidence" value="ECO:0007669"/>
    <property type="project" value="TreeGrafter"/>
</dbReference>
<dbReference type="GO" id="GO:0003735">
    <property type="term" value="F:structural constituent of ribosome"/>
    <property type="evidence" value="ECO:0007669"/>
    <property type="project" value="InterPro"/>
</dbReference>
<dbReference type="GO" id="GO:0006412">
    <property type="term" value="P:translation"/>
    <property type="evidence" value="ECO:0007669"/>
    <property type="project" value="UniProtKB-UniRule"/>
</dbReference>
<dbReference type="FunFam" id="3.30.230.10:FF:000001">
    <property type="entry name" value="30S ribosomal protein S9"/>
    <property type="match status" value="1"/>
</dbReference>
<dbReference type="Gene3D" id="3.30.230.10">
    <property type="match status" value="1"/>
</dbReference>
<dbReference type="HAMAP" id="MF_00532_B">
    <property type="entry name" value="Ribosomal_uS9_B"/>
    <property type="match status" value="1"/>
</dbReference>
<dbReference type="InterPro" id="IPR020568">
    <property type="entry name" value="Ribosomal_Su5_D2-typ_SF"/>
</dbReference>
<dbReference type="InterPro" id="IPR000754">
    <property type="entry name" value="Ribosomal_uS9"/>
</dbReference>
<dbReference type="InterPro" id="IPR023035">
    <property type="entry name" value="Ribosomal_uS9_bac/plastid"/>
</dbReference>
<dbReference type="InterPro" id="IPR020574">
    <property type="entry name" value="Ribosomal_uS9_CS"/>
</dbReference>
<dbReference type="InterPro" id="IPR014721">
    <property type="entry name" value="Ribsml_uS5_D2-typ_fold_subgr"/>
</dbReference>
<dbReference type="NCBIfam" id="NF001099">
    <property type="entry name" value="PRK00132.1"/>
    <property type="match status" value="1"/>
</dbReference>
<dbReference type="PANTHER" id="PTHR21569">
    <property type="entry name" value="RIBOSOMAL PROTEIN S9"/>
    <property type="match status" value="1"/>
</dbReference>
<dbReference type="PANTHER" id="PTHR21569:SF1">
    <property type="entry name" value="SMALL RIBOSOMAL SUBUNIT PROTEIN US9M"/>
    <property type="match status" value="1"/>
</dbReference>
<dbReference type="Pfam" id="PF00380">
    <property type="entry name" value="Ribosomal_S9"/>
    <property type="match status" value="1"/>
</dbReference>
<dbReference type="SUPFAM" id="SSF54211">
    <property type="entry name" value="Ribosomal protein S5 domain 2-like"/>
    <property type="match status" value="1"/>
</dbReference>
<dbReference type="PROSITE" id="PS00360">
    <property type="entry name" value="RIBOSOMAL_S9"/>
    <property type="match status" value="1"/>
</dbReference>
<evidence type="ECO:0000255" key="1">
    <source>
        <dbReference type="HAMAP-Rule" id="MF_00532"/>
    </source>
</evidence>
<evidence type="ECO:0000305" key="2"/>
<feature type="chain" id="PRO_1000051324" description="Small ribosomal subunit protein uS9">
    <location>
        <begin position="1"/>
        <end position="130"/>
    </location>
</feature>
<comment type="similarity">
    <text evidence="1">Belongs to the universal ribosomal protein uS9 family.</text>
</comment>
<keyword id="KW-0687">Ribonucleoprotein</keyword>
<keyword id="KW-0689">Ribosomal protein</keyword>
<protein>
    <recommendedName>
        <fullName evidence="1">Small ribosomal subunit protein uS9</fullName>
    </recommendedName>
    <alternativeName>
        <fullName evidence="2">30S ribosomal protein S9</fullName>
    </alternativeName>
</protein>
<proteinExistence type="inferred from homology"/>